<name>WTF35_SCHKA</name>
<gene>
    <name evidence="9" type="primary">wtf35</name>
</gene>
<dbReference type="EMBL" id="MH837459">
    <property type="protein sequence ID" value="QBL54521.1"/>
    <property type="molecule type" value="Genomic_DNA"/>
</dbReference>
<dbReference type="GO" id="GO:0005737">
    <property type="term" value="C:cytoplasm"/>
    <property type="evidence" value="ECO:0000305"/>
    <property type="project" value="UniProtKB"/>
</dbReference>
<dbReference type="GO" id="GO:0005774">
    <property type="term" value="C:vacuolar membrane"/>
    <property type="evidence" value="ECO:0007669"/>
    <property type="project" value="UniProtKB-SubCell"/>
</dbReference>
<dbReference type="GO" id="GO:0110134">
    <property type="term" value="P:meiotic drive"/>
    <property type="evidence" value="ECO:0000269"/>
    <property type="project" value="UniProtKB"/>
</dbReference>
<dbReference type="InterPro" id="IPR004982">
    <property type="entry name" value="WTF"/>
</dbReference>
<dbReference type="Pfam" id="PF03303">
    <property type="entry name" value="WTF"/>
    <property type="match status" value="1"/>
</dbReference>
<accession>A0A482AU66</accession>
<comment type="function">
    <text evidence="1 2 6">Acts as a suppressor component of the dual wtf meiotic drive system, and can suppress but not confer meiotic drive by compatible poisons (PubMed:32032353). Wtf meiotic drive systems promote unequal transmission of alleles from the parental zygote to progeny spores by encoding a poison and an antidote from the same locus; the poison is trans-acting and forms toxic aggregates in all spores within an ascus, wherease the antidote is spore-specific and targets aggregates for degradation by the vacuole (By similarity). Meiotic drive by wtf systems therefore lead to poisoning of all progeny that do not inherit the dual poison/antidote allele, or express a compatible antidote (By similarity).</text>
</comment>
<comment type="subunit">
    <text evidence="1 3">Homomer (By similarity). Interacts with other proteins that exhibit high sequence similarity (By similarity).</text>
</comment>
<comment type="subcellular location">
    <subcellularLocation>
        <location evidence="1 4">Spore membrane</location>
        <topology evidence="4">Multi-pass membrane protein</topology>
    </subcellularLocation>
    <subcellularLocation>
        <location evidence="1 4">Vacuole membrane</location>
        <topology evidence="4">Multi-pass membrane protein</topology>
    </subcellularLocation>
</comment>
<comment type="similarity">
    <text evidence="8">Belongs to the WTF family.</text>
</comment>
<organism evidence="9">
    <name type="scientific">Schizosaccharomyces kambucha</name>
    <name type="common">Fission yeast</name>
    <dbReference type="NCBI Taxonomy" id="204045"/>
    <lineage>
        <taxon>Eukaryota</taxon>
        <taxon>Fungi</taxon>
        <taxon>Dikarya</taxon>
        <taxon>Ascomycota</taxon>
        <taxon>Taphrinomycotina</taxon>
        <taxon>Schizosaccharomycetes</taxon>
        <taxon>Schizosaccharomycetales</taxon>
        <taxon>Schizosaccharomycetaceae</taxon>
        <taxon>Schizosaccharomyces</taxon>
    </lineage>
</organism>
<protein>
    <recommendedName>
        <fullName evidence="7">Meiotic drive suppressor wtf35</fullName>
    </recommendedName>
</protein>
<sequence>MKNNYTSLKSPLDEEDELKTDHEIDLEKGLLPEYNSEEEGALPPYSDISKLAKTVPEDSSTGPTETANPNVERRQGFKDSHPNIYSLLRLLISVLAVSVVFFTAWVCVNPLEKSIFGKVAFSVTIGITCPILFIAIFCFFETWTQAVAQCIKVTAIFLAQCVKACGKGIKHFLKKWENMPMAFSEVFLFNILVGSPRMNLRYIFGDRWGLKCSLAEHITFVVLSILVFIAETVKPGSIRVNLIRKMGYEAKQQVNEYTAVPLREMNPESEA</sequence>
<feature type="chain" id="PRO_0000452272" description="Meiotic drive suppressor wtf35">
    <location>
        <begin position="1"/>
        <end position="271"/>
    </location>
</feature>
<feature type="transmembrane region" description="Helical" evidence="4">
    <location>
        <begin position="90"/>
        <end position="110"/>
    </location>
</feature>
<feature type="transmembrane region" description="Helical" evidence="4">
    <location>
        <begin position="120"/>
        <end position="140"/>
    </location>
</feature>
<feature type="transmembrane region" description="Helical" evidence="4">
    <location>
        <begin position="176"/>
        <end position="196"/>
    </location>
</feature>
<feature type="transmembrane region" description="Helical" evidence="4">
    <location>
        <begin position="213"/>
        <end position="233"/>
    </location>
</feature>
<feature type="region of interest" description="Disordered" evidence="5">
    <location>
        <begin position="1"/>
        <end position="24"/>
    </location>
</feature>
<feature type="region of interest" description="Disordered" evidence="5">
    <location>
        <begin position="54"/>
        <end position="75"/>
    </location>
</feature>
<feature type="compositionally biased region" description="Polar residues" evidence="5">
    <location>
        <begin position="57"/>
        <end position="69"/>
    </location>
</feature>
<evidence type="ECO:0000250" key="1">
    <source>
        <dbReference type="UniProtKB" id="A0A218N034"/>
    </source>
</evidence>
<evidence type="ECO:0000250" key="2">
    <source>
        <dbReference type="UniProtKB" id="A0A482ATU4"/>
    </source>
</evidence>
<evidence type="ECO:0000250" key="3">
    <source>
        <dbReference type="UniProtKB" id="O74420"/>
    </source>
</evidence>
<evidence type="ECO:0000255" key="4"/>
<evidence type="ECO:0000256" key="5">
    <source>
        <dbReference type="SAM" id="MobiDB-lite"/>
    </source>
</evidence>
<evidence type="ECO:0000269" key="6">
    <source>
    </source>
</evidence>
<evidence type="ECO:0000303" key="7">
    <source>
    </source>
</evidence>
<evidence type="ECO:0000305" key="8"/>
<evidence type="ECO:0000312" key="9">
    <source>
        <dbReference type="EMBL" id="QBL54521.1"/>
    </source>
</evidence>
<proteinExistence type="inferred from homology"/>
<reference evidence="9" key="1">
    <citation type="journal article" date="2020" name="PLoS Genet.">
        <title>Dramatically diverse Schizosaccharomyces pombe wtf meiotic drivers all display high gamete-killing efficiency.</title>
        <authorList>
            <person name="Bravo Nunez M.A."/>
            <person name="Sabbarini I.M."/>
            <person name="Eickbush M.T."/>
            <person name="Liang Y."/>
            <person name="Lange J.J."/>
            <person name="Kent A.M."/>
            <person name="Zanders S.E."/>
        </authorList>
    </citation>
    <scope>NUCLEOTIDE SEQUENCE [GENOMIC DNA]</scope>
    <scope>FUNCTION</scope>
</reference>
<keyword id="KW-0472">Membrane</keyword>
<keyword id="KW-0812">Transmembrane</keyword>
<keyword id="KW-1133">Transmembrane helix</keyword>
<keyword id="KW-0926">Vacuole</keyword>